<evidence type="ECO:0000269" key="1">
    <source>
    </source>
</evidence>
<evidence type="ECO:0000269" key="2">
    <source>
    </source>
</evidence>
<evidence type="ECO:0000269" key="3">
    <source>
    </source>
</evidence>
<evidence type="ECO:0000305" key="4"/>
<accession>Q50562</accession>
<name>ISF_METTE</name>
<gene>
    <name type="primary">isf</name>
</gene>
<sequence length="191" mass="20921">MKITGISGSPRKGQNCEKIIGAALEVAKERGFETDTVFISNEEVAPCKACGACRDQDFCVIDDDMDEIYEKMRAADGIIVAAPVYMGNYPAQLKALFDRSVLLRRKNFALKNKVGAALSVGGSRNGGQEKTIQSIHDWMHIHGMIVVGDNSHFGGITWNPAEEDTVGMQTVSETAKKLCDVLELIQKNRDK</sequence>
<reference key="1">
    <citation type="journal article" date="1996" name="J. Biol. Chem.">
        <title>Characterization of an iron-sulfur flavoprotein from Methanosarcina thermophila.</title>
        <authorList>
            <person name="Latimer M.T."/>
            <person name="Painter M.H."/>
            <person name="Ferry J.G."/>
        </authorList>
    </citation>
    <scope>NUCLEOTIDE SEQUENCE [GENOMIC DNA]</scope>
    <scope>PROTEIN SEQUENCE OF 1-5</scope>
    <scope>FMN BINDING</scope>
    <scope>IRON-SULFUR CLUSTER</scope>
    <scope>SUBUNIT</scope>
    <source>
        <strain>ATCC 43570 / DSM 1825 / OCM 12 / TM-1</strain>
    </source>
</reference>
<reference key="2">
    <citation type="journal article" date="1998" name="J. Biol. Chem.">
        <title>Electrochemical and spectroscopic properties of the iron-sulfur flavoprotein from Methanosarcina thermophila.</title>
        <authorList>
            <person name="Becker D.F."/>
            <person name="Leartsakulpanich U."/>
            <person name="Surerus K.K."/>
            <person name="Ferry J.G."/>
            <person name="Ragsdale S.W."/>
        </authorList>
    </citation>
    <scope>FUNCTION</scope>
</reference>
<reference key="3">
    <citation type="journal article" date="2000" name="J. Bacteriol.">
        <title>Site-specific mutational analysis of a novel cysteine motif proposed to ligate the 4Fe-4S cluster in the iron-sulfur flavoprotein of the thermophilic methanoarchaeon Methanosarcina thermophila.</title>
        <authorList>
            <person name="Leartsakulpanich U."/>
            <person name="Antonkine M.L."/>
            <person name="Ferry J.G."/>
        </authorList>
    </citation>
    <scope>IRON-SULFUR CLUSTER BINDING AT CYS-47; CYS-50; CYS-53 AND CYS-59</scope>
    <scope>MUTAGENESIS OF CYS-16; CYS-47; CYS-50; CYS-53; CYS-59 AND CYS-179</scope>
</reference>
<keyword id="KW-0004">4Fe-4S</keyword>
<keyword id="KW-0903">Direct protein sequencing</keyword>
<keyword id="KW-0285">Flavoprotein</keyword>
<keyword id="KW-0288">FMN</keyword>
<keyword id="KW-0408">Iron</keyword>
<keyword id="KW-0411">Iron-sulfur</keyword>
<keyword id="KW-0479">Metal-binding</keyword>
<organism>
    <name type="scientific">Methanosarcina thermophila</name>
    <dbReference type="NCBI Taxonomy" id="2210"/>
    <lineage>
        <taxon>Archaea</taxon>
        <taxon>Methanobacteriati</taxon>
        <taxon>Methanobacteriota</taxon>
        <taxon>Stenosarchaea group</taxon>
        <taxon>Methanomicrobia</taxon>
        <taxon>Methanosarcinales</taxon>
        <taxon>Methanosarcinaceae</taxon>
        <taxon>Methanosarcina</taxon>
    </lineage>
</organism>
<dbReference type="EMBL" id="U50189">
    <property type="protein sequence ID" value="AAC45465.1"/>
    <property type="molecule type" value="Genomic_DNA"/>
</dbReference>
<dbReference type="SMR" id="Q50562"/>
<dbReference type="GO" id="GO:0051539">
    <property type="term" value="F:4 iron, 4 sulfur cluster binding"/>
    <property type="evidence" value="ECO:0007669"/>
    <property type="project" value="UniProtKB-KW"/>
</dbReference>
<dbReference type="GO" id="GO:0046872">
    <property type="term" value="F:metal ion binding"/>
    <property type="evidence" value="ECO:0007669"/>
    <property type="project" value="UniProtKB-KW"/>
</dbReference>
<dbReference type="GO" id="GO:0016491">
    <property type="term" value="F:oxidoreductase activity"/>
    <property type="evidence" value="ECO:0007669"/>
    <property type="project" value="InterPro"/>
</dbReference>
<dbReference type="Gene3D" id="3.40.50.360">
    <property type="match status" value="1"/>
</dbReference>
<dbReference type="InterPro" id="IPR029039">
    <property type="entry name" value="Flavoprotein-like_sf"/>
</dbReference>
<dbReference type="InterPro" id="IPR005025">
    <property type="entry name" value="FMN_Rdtase-like_dom"/>
</dbReference>
<dbReference type="InterPro" id="IPR051796">
    <property type="entry name" value="ISF_SsuE-like"/>
</dbReference>
<dbReference type="PANTHER" id="PTHR43278:SF1">
    <property type="entry name" value="IRON-SULFUR FLAVOPROTEIN MJ1083"/>
    <property type="match status" value="1"/>
</dbReference>
<dbReference type="PANTHER" id="PTHR43278">
    <property type="entry name" value="NAD(P)H-DEPENDENT FMN-CONTAINING OXIDOREDUCTASE YWQN-RELATED"/>
    <property type="match status" value="1"/>
</dbReference>
<dbReference type="Pfam" id="PF03358">
    <property type="entry name" value="FMN_red"/>
    <property type="match status" value="1"/>
</dbReference>
<dbReference type="SUPFAM" id="SSF52218">
    <property type="entry name" value="Flavoproteins"/>
    <property type="match status" value="1"/>
</dbReference>
<comment type="function">
    <text evidence="3">Redox-active protein probably involved in electron transport during fermentation of acetate to methane.</text>
</comment>
<comment type="cofactor">
    <cofactor>
        <name>FMN</name>
        <dbReference type="ChEBI" id="CHEBI:58210"/>
    </cofactor>
    <text>Binds 1 FMN per subunit.</text>
</comment>
<comment type="cofactor">
    <cofactor>
        <name>[4Fe-4S] cluster</name>
        <dbReference type="ChEBI" id="CHEBI:49883"/>
    </cofactor>
    <text>Binds 1 [4Fe-4S] cluster per subunit.</text>
</comment>
<comment type="subunit">
    <text evidence="2">Homodimer.</text>
</comment>
<comment type="miscellaneous">
    <text>The electrons derived from oxidation of the carbonyl group of acetate flow from ferredoxin to the 4Fe-4S cluster and then to the FMN cofactor.</text>
</comment>
<comment type="similarity">
    <text evidence="4">Belongs to the SsuE family. Isf subfamily.</text>
</comment>
<proteinExistence type="evidence at protein level"/>
<protein>
    <recommendedName>
        <fullName>Iron-sulfur flavoprotein</fullName>
        <shortName>Isf</shortName>
    </recommendedName>
</protein>
<feature type="chain" id="PRO_0000332945" description="Iron-sulfur flavoprotein">
    <location>
        <begin position="1"/>
        <end position="191"/>
    </location>
</feature>
<feature type="binding site">
    <location>
        <position position="47"/>
    </location>
    <ligand>
        <name>[4Fe-4S] cluster</name>
        <dbReference type="ChEBI" id="CHEBI:49883"/>
    </ligand>
</feature>
<feature type="binding site">
    <location>
        <position position="50"/>
    </location>
    <ligand>
        <name>[4Fe-4S] cluster</name>
        <dbReference type="ChEBI" id="CHEBI:49883"/>
    </ligand>
</feature>
<feature type="binding site">
    <location>
        <position position="53"/>
    </location>
    <ligand>
        <name>[4Fe-4S] cluster</name>
        <dbReference type="ChEBI" id="CHEBI:49883"/>
    </ligand>
</feature>
<feature type="binding site">
    <location>
        <position position="59"/>
    </location>
    <ligand>
        <name>[4Fe-4S] cluster</name>
        <dbReference type="ChEBI" id="CHEBI:49883"/>
    </ligand>
</feature>
<feature type="mutagenesis site" description="Unmodified 4Fe-4S-cluster properties in electron paramagnetic resonance." evidence="1">
    <original>C</original>
    <variation>S</variation>
    <location>
        <position position="16"/>
    </location>
</feature>
<feature type="mutagenesis site" description="Modified 4Fe-4S-cluster properties in electron paramagnetic resonance." evidence="1">
    <original>C</original>
    <variation>S</variation>
    <location>
        <position position="47"/>
    </location>
</feature>
<feature type="mutagenesis site" description="Formation of a 3Fe-4S cluster in place of the 4Fe-4S cluster." evidence="1">
    <original>C</original>
    <variation>A</variation>
    <location>
        <position position="50"/>
    </location>
</feature>
<feature type="mutagenesis site" description="Modified 4Fe-4S-cluster properties in electron paramagnetic resonance." evidence="1">
    <original>C</original>
    <variation>S</variation>
    <location>
        <position position="53"/>
    </location>
</feature>
<feature type="mutagenesis site" description="Formation of a 3Fe-4S cluster in place of the 4Fe-4S cluster." evidence="1">
    <original>C</original>
    <variation>A</variation>
    <location>
        <position position="59"/>
    </location>
</feature>
<feature type="mutagenesis site" description="Unmodified 4Fe-4S-cluster properties in electron paramagnetic resonance." evidence="1">
    <original>C</original>
    <variation>S</variation>
    <location>
        <position position="179"/>
    </location>
</feature>